<comment type="function">
    <text evidence="1">Catalyzes the hydrolysis of glutamine to glutamate and ammonia as part of the biosynthesis of pyridoxal 5'-phosphate. The resulting ammonia molecule is channeled to the active site of PdxS.</text>
</comment>
<comment type="catalytic activity">
    <reaction evidence="1">
        <text>aldehydo-D-ribose 5-phosphate + D-glyceraldehyde 3-phosphate + L-glutamine = pyridoxal 5'-phosphate + L-glutamate + phosphate + 3 H2O + H(+)</text>
        <dbReference type="Rhea" id="RHEA:31507"/>
        <dbReference type="ChEBI" id="CHEBI:15377"/>
        <dbReference type="ChEBI" id="CHEBI:15378"/>
        <dbReference type="ChEBI" id="CHEBI:29985"/>
        <dbReference type="ChEBI" id="CHEBI:43474"/>
        <dbReference type="ChEBI" id="CHEBI:58273"/>
        <dbReference type="ChEBI" id="CHEBI:58359"/>
        <dbReference type="ChEBI" id="CHEBI:59776"/>
        <dbReference type="ChEBI" id="CHEBI:597326"/>
        <dbReference type="EC" id="4.3.3.6"/>
    </reaction>
</comment>
<comment type="catalytic activity">
    <reaction evidence="1">
        <text>L-glutamine + H2O = L-glutamate + NH4(+)</text>
        <dbReference type="Rhea" id="RHEA:15889"/>
        <dbReference type="ChEBI" id="CHEBI:15377"/>
        <dbReference type="ChEBI" id="CHEBI:28938"/>
        <dbReference type="ChEBI" id="CHEBI:29985"/>
        <dbReference type="ChEBI" id="CHEBI:58359"/>
        <dbReference type="EC" id="3.5.1.2"/>
    </reaction>
</comment>
<comment type="pathway">
    <text evidence="1">Cofactor biosynthesis; pyridoxal 5'-phosphate biosynthesis.</text>
</comment>
<comment type="subunit">
    <text evidence="1">In the presence of PdxS, forms a dodecamer of heterodimers. Only shows activity in the heterodimer.</text>
</comment>
<comment type="similarity">
    <text evidence="1">Belongs to the glutaminase PdxT/SNO family.</text>
</comment>
<sequence length="196" mass="21432">MVKIGVLGLQGAVREHVKSVEASGAEAVVVKRIEQLEEIDGLILPGGESTTMRRLIDKYDFMEPLRTFAKSGKPMFGTCAGMILLAKTLIGYDEAHIGAMDITVERNAFGRQKDSFEAALSIKGVGEDFVGVFIRAPYVVDVADDVEVLSTHGDRMVAVKQGPFLAASFHPELTDDHRVTAYFVEMVKEAKMKKVV</sequence>
<feature type="chain" id="PRO_0000135622" description="Pyridoxal 5'-phosphate synthase subunit PdxT">
    <location>
        <begin position="1"/>
        <end position="196"/>
    </location>
</feature>
<feature type="active site" description="Nucleophile" evidence="1">
    <location>
        <position position="79"/>
    </location>
</feature>
<feature type="active site" description="Charge relay system" evidence="1">
    <location>
        <position position="170"/>
    </location>
</feature>
<feature type="active site" description="Charge relay system" evidence="1">
    <location>
        <position position="172"/>
    </location>
</feature>
<feature type="binding site" evidence="1">
    <location>
        <begin position="47"/>
        <end position="49"/>
    </location>
    <ligand>
        <name>L-glutamine</name>
        <dbReference type="ChEBI" id="CHEBI:58359"/>
    </ligand>
</feature>
<feature type="binding site" evidence="1">
    <location>
        <position position="106"/>
    </location>
    <ligand>
        <name>L-glutamine</name>
        <dbReference type="ChEBI" id="CHEBI:58359"/>
    </ligand>
</feature>
<feature type="binding site" evidence="1">
    <location>
        <begin position="134"/>
        <end position="135"/>
    </location>
    <ligand>
        <name>L-glutamine</name>
        <dbReference type="ChEBI" id="CHEBI:58359"/>
    </ligand>
</feature>
<accession>Q81W26</accession>
<accession>Q6I528</accession>
<accession>Q6KYS2</accession>
<protein>
    <recommendedName>
        <fullName evidence="1">Pyridoxal 5'-phosphate synthase subunit PdxT</fullName>
        <ecNumber evidence="1">4.3.3.6</ecNumber>
    </recommendedName>
    <alternativeName>
        <fullName evidence="1">Pdx2</fullName>
    </alternativeName>
    <alternativeName>
        <fullName evidence="1">Pyridoxal 5'-phosphate synthase glutaminase subunit</fullName>
        <ecNumber evidence="1">3.5.1.2</ecNumber>
    </alternativeName>
</protein>
<name>PDXT_BACAN</name>
<proteinExistence type="inferred from homology"/>
<reference key="1">
    <citation type="journal article" date="2003" name="Nature">
        <title>The genome sequence of Bacillus anthracis Ames and comparison to closely related bacteria.</title>
        <authorList>
            <person name="Read T.D."/>
            <person name="Peterson S.N."/>
            <person name="Tourasse N.J."/>
            <person name="Baillie L.W."/>
            <person name="Paulsen I.T."/>
            <person name="Nelson K.E."/>
            <person name="Tettelin H."/>
            <person name="Fouts D.E."/>
            <person name="Eisen J.A."/>
            <person name="Gill S.R."/>
            <person name="Holtzapple E.K."/>
            <person name="Okstad O.A."/>
            <person name="Helgason E."/>
            <person name="Rilstone J."/>
            <person name="Wu M."/>
            <person name="Kolonay J.F."/>
            <person name="Beanan M.J."/>
            <person name="Dodson R.J."/>
            <person name="Brinkac L.M."/>
            <person name="Gwinn M.L."/>
            <person name="DeBoy R.T."/>
            <person name="Madpu R."/>
            <person name="Daugherty S.C."/>
            <person name="Durkin A.S."/>
            <person name="Haft D.H."/>
            <person name="Nelson W.C."/>
            <person name="Peterson J.D."/>
            <person name="Pop M."/>
            <person name="Khouri H.M."/>
            <person name="Radune D."/>
            <person name="Benton J.L."/>
            <person name="Mahamoud Y."/>
            <person name="Jiang L."/>
            <person name="Hance I.R."/>
            <person name="Weidman J.F."/>
            <person name="Berry K.J."/>
            <person name="Plaut R.D."/>
            <person name="Wolf A.M."/>
            <person name="Watkins K.L."/>
            <person name="Nierman W.C."/>
            <person name="Hazen A."/>
            <person name="Cline R.T."/>
            <person name="Redmond C."/>
            <person name="Thwaite J.E."/>
            <person name="White O."/>
            <person name="Salzberg S.L."/>
            <person name="Thomason B."/>
            <person name="Friedlander A.M."/>
            <person name="Koehler T.M."/>
            <person name="Hanna P.C."/>
            <person name="Kolstoe A.-B."/>
            <person name="Fraser C.M."/>
        </authorList>
    </citation>
    <scope>NUCLEOTIDE SEQUENCE [LARGE SCALE GENOMIC DNA]</scope>
    <source>
        <strain>Ames / isolate Porton</strain>
    </source>
</reference>
<reference key="2">
    <citation type="journal article" date="2009" name="J. Bacteriol.">
        <title>The complete genome sequence of Bacillus anthracis Ames 'Ancestor'.</title>
        <authorList>
            <person name="Ravel J."/>
            <person name="Jiang L."/>
            <person name="Stanley S.T."/>
            <person name="Wilson M.R."/>
            <person name="Decker R.S."/>
            <person name="Read T.D."/>
            <person name="Worsham P."/>
            <person name="Keim P.S."/>
            <person name="Salzberg S.L."/>
            <person name="Fraser-Liggett C.M."/>
            <person name="Rasko D.A."/>
        </authorList>
    </citation>
    <scope>NUCLEOTIDE SEQUENCE [LARGE SCALE GENOMIC DNA]</scope>
    <source>
        <strain>Ames ancestor</strain>
    </source>
</reference>
<reference key="3">
    <citation type="submission" date="2004-01" db="EMBL/GenBank/DDBJ databases">
        <title>Complete genome sequence of Bacillus anthracis Sterne.</title>
        <authorList>
            <person name="Brettin T.S."/>
            <person name="Bruce D."/>
            <person name="Challacombe J.F."/>
            <person name="Gilna P."/>
            <person name="Han C."/>
            <person name="Hill K."/>
            <person name="Hitchcock P."/>
            <person name="Jackson P."/>
            <person name="Keim P."/>
            <person name="Longmire J."/>
            <person name="Lucas S."/>
            <person name="Okinaka R."/>
            <person name="Richardson P."/>
            <person name="Rubin E."/>
            <person name="Tice H."/>
        </authorList>
    </citation>
    <scope>NUCLEOTIDE SEQUENCE [LARGE SCALE GENOMIC DNA]</scope>
    <source>
        <strain>Sterne</strain>
    </source>
</reference>
<evidence type="ECO:0000255" key="1">
    <source>
        <dbReference type="HAMAP-Rule" id="MF_01615"/>
    </source>
</evidence>
<gene>
    <name evidence="1" type="primary">pdxT</name>
    <name type="ordered locus">BA_0011</name>
    <name type="ordered locus">GBAA_0011</name>
    <name type="ordered locus">BAS0014</name>
</gene>
<organism>
    <name type="scientific">Bacillus anthracis</name>
    <dbReference type="NCBI Taxonomy" id="1392"/>
    <lineage>
        <taxon>Bacteria</taxon>
        <taxon>Bacillati</taxon>
        <taxon>Bacillota</taxon>
        <taxon>Bacilli</taxon>
        <taxon>Bacillales</taxon>
        <taxon>Bacillaceae</taxon>
        <taxon>Bacillus</taxon>
        <taxon>Bacillus cereus group</taxon>
    </lineage>
</organism>
<dbReference type="EC" id="4.3.3.6" evidence="1"/>
<dbReference type="EC" id="3.5.1.2" evidence="1"/>
<dbReference type="EMBL" id="AE016879">
    <property type="protein sequence ID" value="AAP24068.1"/>
    <property type="molecule type" value="Genomic_DNA"/>
</dbReference>
<dbReference type="EMBL" id="AE017334">
    <property type="protein sequence ID" value="AAT29091.1"/>
    <property type="molecule type" value="Genomic_DNA"/>
</dbReference>
<dbReference type="EMBL" id="AE017225">
    <property type="protein sequence ID" value="AAT52353.1"/>
    <property type="molecule type" value="Genomic_DNA"/>
</dbReference>
<dbReference type="RefSeq" id="NP_842582.1">
    <property type="nucleotide sequence ID" value="NC_003997.3"/>
</dbReference>
<dbReference type="RefSeq" id="WP_000238798.1">
    <property type="nucleotide sequence ID" value="NZ_WXXJ01000022.1"/>
</dbReference>
<dbReference type="RefSeq" id="YP_026302.1">
    <property type="nucleotide sequence ID" value="NC_005945.1"/>
</dbReference>
<dbReference type="SMR" id="Q81W26"/>
<dbReference type="STRING" id="261594.GBAA_0011"/>
<dbReference type="MEROPS" id="C26.A32"/>
<dbReference type="DNASU" id="1083754"/>
<dbReference type="GeneID" id="45020050"/>
<dbReference type="KEGG" id="ban:BA_0011"/>
<dbReference type="KEGG" id="bar:GBAA_0011"/>
<dbReference type="KEGG" id="bat:BAS0014"/>
<dbReference type="PATRIC" id="fig|198094.11.peg.11"/>
<dbReference type="eggNOG" id="COG0311">
    <property type="taxonomic scope" value="Bacteria"/>
</dbReference>
<dbReference type="HOGENOM" id="CLU_069674_2_0_9"/>
<dbReference type="OMA" id="GMIMLAD"/>
<dbReference type="OrthoDB" id="9810320at2"/>
<dbReference type="UniPathway" id="UPA00245"/>
<dbReference type="Proteomes" id="UP000000427">
    <property type="component" value="Chromosome"/>
</dbReference>
<dbReference type="Proteomes" id="UP000000594">
    <property type="component" value="Chromosome"/>
</dbReference>
<dbReference type="GO" id="GO:0005829">
    <property type="term" value="C:cytosol"/>
    <property type="evidence" value="ECO:0007669"/>
    <property type="project" value="TreeGrafter"/>
</dbReference>
<dbReference type="GO" id="GO:1903600">
    <property type="term" value="C:glutaminase complex"/>
    <property type="evidence" value="ECO:0007669"/>
    <property type="project" value="TreeGrafter"/>
</dbReference>
<dbReference type="GO" id="GO:0004359">
    <property type="term" value="F:glutaminase activity"/>
    <property type="evidence" value="ECO:0007669"/>
    <property type="project" value="UniProtKB-UniRule"/>
</dbReference>
<dbReference type="GO" id="GO:0036381">
    <property type="term" value="F:pyridoxal 5'-phosphate synthase (glutamine hydrolysing) activity"/>
    <property type="evidence" value="ECO:0007669"/>
    <property type="project" value="UniProtKB-UniRule"/>
</dbReference>
<dbReference type="GO" id="GO:0006543">
    <property type="term" value="P:glutamine catabolic process"/>
    <property type="evidence" value="ECO:0007669"/>
    <property type="project" value="UniProtKB-UniRule"/>
</dbReference>
<dbReference type="GO" id="GO:0042823">
    <property type="term" value="P:pyridoxal phosphate biosynthetic process"/>
    <property type="evidence" value="ECO:0007669"/>
    <property type="project" value="UniProtKB-UniRule"/>
</dbReference>
<dbReference type="GO" id="GO:0008614">
    <property type="term" value="P:pyridoxine metabolic process"/>
    <property type="evidence" value="ECO:0007669"/>
    <property type="project" value="TreeGrafter"/>
</dbReference>
<dbReference type="CDD" id="cd01749">
    <property type="entry name" value="GATase1_PB"/>
    <property type="match status" value="1"/>
</dbReference>
<dbReference type="FunFam" id="3.40.50.880:FF:000010">
    <property type="entry name" value="uncharacterized protein LOC100176842 isoform X2"/>
    <property type="match status" value="1"/>
</dbReference>
<dbReference type="Gene3D" id="3.40.50.880">
    <property type="match status" value="1"/>
</dbReference>
<dbReference type="HAMAP" id="MF_01615">
    <property type="entry name" value="PdxT"/>
    <property type="match status" value="1"/>
</dbReference>
<dbReference type="InterPro" id="IPR029062">
    <property type="entry name" value="Class_I_gatase-like"/>
</dbReference>
<dbReference type="InterPro" id="IPR002161">
    <property type="entry name" value="PdxT/SNO"/>
</dbReference>
<dbReference type="InterPro" id="IPR021196">
    <property type="entry name" value="PdxT/SNO_CS"/>
</dbReference>
<dbReference type="NCBIfam" id="TIGR03800">
    <property type="entry name" value="PLP_synth_Pdx2"/>
    <property type="match status" value="1"/>
</dbReference>
<dbReference type="PANTHER" id="PTHR31559">
    <property type="entry name" value="PYRIDOXAL 5'-PHOSPHATE SYNTHASE SUBUNIT SNO"/>
    <property type="match status" value="1"/>
</dbReference>
<dbReference type="PANTHER" id="PTHR31559:SF0">
    <property type="entry name" value="PYRIDOXAL 5'-PHOSPHATE SYNTHASE SUBUNIT SNO1-RELATED"/>
    <property type="match status" value="1"/>
</dbReference>
<dbReference type="Pfam" id="PF01174">
    <property type="entry name" value="SNO"/>
    <property type="match status" value="1"/>
</dbReference>
<dbReference type="PIRSF" id="PIRSF005639">
    <property type="entry name" value="Glut_amidoT_SNO"/>
    <property type="match status" value="1"/>
</dbReference>
<dbReference type="SUPFAM" id="SSF52317">
    <property type="entry name" value="Class I glutamine amidotransferase-like"/>
    <property type="match status" value="1"/>
</dbReference>
<dbReference type="PROSITE" id="PS01236">
    <property type="entry name" value="PDXT_SNO_1"/>
    <property type="match status" value="1"/>
</dbReference>
<dbReference type="PROSITE" id="PS51130">
    <property type="entry name" value="PDXT_SNO_2"/>
    <property type="match status" value="1"/>
</dbReference>
<keyword id="KW-0315">Glutamine amidotransferase</keyword>
<keyword id="KW-0378">Hydrolase</keyword>
<keyword id="KW-0456">Lyase</keyword>
<keyword id="KW-0663">Pyridoxal phosphate</keyword>
<keyword id="KW-1185">Reference proteome</keyword>